<comment type="function">
    <text evidence="1">Involved in the restart of stalled replication forks, which reloads the replicative helicase on sites other than the origin of replication; the PriA-PriB pathway is the major replication restart pathway. During primosome assembly it facilitates complex formation between PriA and DnaT on DNA; stabilizes PriA on DNA. Stimulates the DNA unwinding activity of PriA helicase.</text>
</comment>
<comment type="subunit">
    <text evidence="1">Homodimer. Interacts with PriA and DnaT. Component of the replication restart primosome. Primosome assembly occurs via a 'hand-off' mechanism. PriA binds to replication forks, subsequently PriB then DnaT bind; DnaT then displaces ssDNA to generate the helicase loading substrate.</text>
</comment>
<comment type="similarity">
    <text evidence="1">Belongs to the PriB family.</text>
</comment>
<dbReference type="EMBL" id="CP000243">
    <property type="protein sequence ID" value="ABE10205.1"/>
    <property type="molecule type" value="Genomic_DNA"/>
</dbReference>
<dbReference type="RefSeq" id="WP_001296681.1">
    <property type="nucleotide sequence ID" value="NZ_CP064825.1"/>
</dbReference>
<dbReference type="SMR" id="Q1R359"/>
<dbReference type="GeneID" id="93777622"/>
<dbReference type="KEGG" id="eci:UTI89_C4801"/>
<dbReference type="HOGENOM" id="CLU_166075_0_0_6"/>
<dbReference type="Proteomes" id="UP000001952">
    <property type="component" value="Chromosome"/>
</dbReference>
<dbReference type="GO" id="GO:1990077">
    <property type="term" value="C:primosome complex"/>
    <property type="evidence" value="ECO:0007669"/>
    <property type="project" value="UniProtKB-KW"/>
</dbReference>
<dbReference type="GO" id="GO:0003697">
    <property type="term" value="F:single-stranded DNA binding"/>
    <property type="evidence" value="ECO:0007669"/>
    <property type="project" value="UniProtKB-UniRule"/>
</dbReference>
<dbReference type="GO" id="GO:0006269">
    <property type="term" value="P:DNA replication, synthesis of primer"/>
    <property type="evidence" value="ECO:0007669"/>
    <property type="project" value="UniProtKB-KW"/>
</dbReference>
<dbReference type="CDD" id="cd04496">
    <property type="entry name" value="SSB_OBF"/>
    <property type="match status" value="1"/>
</dbReference>
<dbReference type="FunFam" id="2.40.50.140:FF:000077">
    <property type="entry name" value="Primosomal replication protein N"/>
    <property type="match status" value="1"/>
</dbReference>
<dbReference type="Gene3D" id="2.40.50.140">
    <property type="entry name" value="Nucleic acid-binding proteins"/>
    <property type="match status" value="1"/>
</dbReference>
<dbReference type="HAMAP" id="MF_00720">
    <property type="entry name" value="PriB"/>
    <property type="match status" value="1"/>
</dbReference>
<dbReference type="InterPro" id="IPR012340">
    <property type="entry name" value="NA-bd_OB-fold"/>
</dbReference>
<dbReference type="InterPro" id="IPR000424">
    <property type="entry name" value="Primosome_PriB/ssb"/>
</dbReference>
<dbReference type="InterPro" id="IPR023646">
    <property type="entry name" value="Prisomal_replication_PriB"/>
</dbReference>
<dbReference type="NCBIfam" id="TIGR04418">
    <property type="entry name" value="PriB_gamma"/>
    <property type="match status" value="1"/>
</dbReference>
<dbReference type="Pfam" id="PF22657">
    <property type="entry name" value="SSB_1"/>
    <property type="match status" value="1"/>
</dbReference>
<dbReference type="PIRSF" id="PIRSF003135">
    <property type="entry name" value="Primosomal_n"/>
    <property type="match status" value="1"/>
</dbReference>
<dbReference type="SUPFAM" id="SSF50249">
    <property type="entry name" value="Nucleic acid-binding proteins"/>
    <property type="match status" value="1"/>
</dbReference>
<dbReference type="PROSITE" id="PS50935">
    <property type="entry name" value="SSB"/>
    <property type="match status" value="1"/>
</dbReference>
<protein>
    <recommendedName>
        <fullName evidence="1">Replication restart protein PriB</fullName>
    </recommendedName>
</protein>
<feature type="chain" id="PRO_1000083278" description="Replication restart protein PriB">
    <location>
        <begin position="1"/>
        <end position="104"/>
    </location>
</feature>
<feature type="domain" description="SSB" evidence="1">
    <location>
        <begin position="1"/>
        <end position="101"/>
    </location>
</feature>
<proteinExistence type="inferred from homology"/>
<name>PRIB_ECOUT</name>
<accession>Q1R359</accession>
<evidence type="ECO:0000255" key="1">
    <source>
        <dbReference type="HAMAP-Rule" id="MF_00720"/>
    </source>
</evidence>
<keyword id="KW-0235">DNA replication</keyword>
<keyword id="KW-0238">DNA-binding</keyword>
<keyword id="KW-0639">Primosome</keyword>
<gene>
    <name evidence="1" type="primary">priB</name>
    <name type="ordered locus">UTI89_C4801</name>
</gene>
<organism>
    <name type="scientific">Escherichia coli (strain UTI89 / UPEC)</name>
    <dbReference type="NCBI Taxonomy" id="364106"/>
    <lineage>
        <taxon>Bacteria</taxon>
        <taxon>Pseudomonadati</taxon>
        <taxon>Pseudomonadota</taxon>
        <taxon>Gammaproteobacteria</taxon>
        <taxon>Enterobacterales</taxon>
        <taxon>Enterobacteriaceae</taxon>
        <taxon>Escherichia</taxon>
    </lineage>
</organism>
<sequence length="104" mass="11472">MTNRLVLSGTVCRTPLRKVSPSGIPHCQFVLEHRSVQEEAGFHRQAWCQMPVIVSGHENQAITHSITVGSRITVQGFISCHKAKNGLSKMVLHAEQIELIDSGD</sequence>
<reference key="1">
    <citation type="journal article" date="2006" name="Proc. Natl. Acad. Sci. U.S.A.">
        <title>Identification of genes subject to positive selection in uropathogenic strains of Escherichia coli: a comparative genomics approach.</title>
        <authorList>
            <person name="Chen S.L."/>
            <person name="Hung C.-S."/>
            <person name="Xu J."/>
            <person name="Reigstad C.S."/>
            <person name="Magrini V."/>
            <person name="Sabo A."/>
            <person name="Blasiar D."/>
            <person name="Bieri T."/>
            <person name="Meyer R.R."/>
            <person name="Ozersky P."/>
            <person name="Armstrong J.R."/>
            <person name="Fulton R.S."/>
            <person name="Latreille J.P."/>
            <person name="Spieth J."/>
            <person name="Hooton T.M."/>
            <person name="Mardis E.R."/>
            <person name="Hultgren S.J."/>
            <person name="Gordon J.I."/>
        </authorList>
    </citation>
    <scope>NUCLEOTIDE SEQUENCE [LARGE SCALE GENOMIC DNA]</scope>
    <source>
        <strain>UTI89 / UPEC</strain>
    </source>
</reference>